<proteinExistence type="inferred from homology"/>
<evidence type="ECO:0000255" key="1">
    <source>
        <dbReference type="HAMAP-Rule" id="MF_00185"/>
    </source>
</evidence>
<sequence>MNKLVFCLMGPTASGKTGLACELLTHFPFEIISVDSAMIYRDMNIGTAKPSIHELQRAPHYLIDIKDPVESYSAAQFCTDALSLCAEIIKRGNIPLLVGGTMMYFNALQKGLATLPEADEAVRKRLEEEALSQGWDFLYQKLSQLDPVTAARIHAHDTQRIQRALEVYYLTGSTLSTYLTGPHEQPDYYFVNLALFPEQRSWLHERIAQRFDAMLSEGFIEEVQQLQAKWPIQINLPAMRCVGYRQILEYLAGHYDYETMREKGIAATRQLAKRQLTWLRHWEGALFYDSQNVGFNTDIIAKIREILDNTVSN</sequence>
<accession>A5IAM8</accession>
<feature type="chain" id="PRO_1000020617" description="tRNA dimethylallyltransferase">
    <location>
        <begin position="1"/>
        <end position="313"/>
    </location>
</feature>
<feature type="region of interest" description="Interaction with substrate tRNA" evidence="1">
    <location>
        <begin position="35"/>
        <end position="38"/>
    </location>
</feature>
<feature type="region of interest" description="Interaction with substrate tRNA" evidence="1">
    <location>
        <begin position="159"/>
        <end position="163"/>
    </location>
</feature>
<feature type="region of interest" description="Interaction with substrate tRNA" evidence="1">
    <location>
        <begin position="240"/>
        <end position="245"/>
    </location>
</feature>
<feature type="binding site" evidence="1">
    <location>
        <begin position="10"/>
        <end position="17"/>
    </location>
    <ligand>
        <name>ATP</name>
        <dbReference type="ChEBI" id="CHEBI:30616"/>
    </ligand>
</feature>
<feature type="binding site" evidence="1">
    <location>
        <begin position="12"/>
        <end position="17"/>
    </location>
    <ligand>
        <name>substrate</name>
    </ligand>
</feature>
<feature type="site" description="Interaction with substrate tRNA" evidence="1">
    <location>
        <position position="101"/>
    </location>
</feature>
<feature type="site" description="Interaction with substrate tRNA" evidence="1">
    <location>
        <position position="123"/>
    </location>
</feature>
<reference key="1">
    <citation type="submission" date="2006-11" db="EMBL/GenBank/DDBJ databases">
        <title>Identification and characterization of a new conjugation/ type IVA secretion system (trb/tra) of L. pneumophila Corby localized on a mobile genomic island.</title>
        <authorList>
            <person name="Gloeckner G."/>
            <person name="Albert-Weissenberger C."/>
            <person name="Weinmann E."/>
            <person name="Jacobi S."/>
            <person name="Schunder E."/>
            <person name="Steinert M."/>
            <person name="Buchrieser C."/>
            <person name="Hacker J."/>
            <person name="Heuner K."/>
        </authorList>
    </citation>
    <scope>NUCLEOTIDE SEQUENCE [LARGE SCALE GENOMIC DNA]</scope>
    <source>
        <strain>Corby</strain>
    </source>
</reference>
<protein>
    <recommendedName>
        <fullName evidence="1">tRNA dimethylallyltransferase</fullName>
        <ecNumber evidence="1">2.5.1.75</ecNumber>
    </recommendedName>
    <alternativeName>
        <fullName evidence="1">Dimethylallyl diphosphate:tRNA dimethylallyltransferase</fullName>
        <shortName evidence="1">DMAPP:tRNA dimethylallyltransferase</shortName>
        <shortName evidence="1">DMATase</shortName>
    </alternativeName>
    <alternativeName>
        <fullName evidence="1">Isopentenyl-diphosphate:tRNA isopentenyltransferase</fullName>
        <shortName evidence="1">IPP transferase</shortName>
        <shortName evidence="1">IPPT</shortName>
        <shortName evidence="1">IPTase</shortName>
    </alternativeName>
</protein>
<gene>
    <name evidence="1" type="primary">miaA</name>
    <name type="ordered locus">LPC_0439</name>
</gene>
<dbReference type="EC" id="2.5.1.75" evidence="1"/>
<dbReference type="EMBL" id="CP000675">
    <property type="protein sequence ID" value="ABQ54428.1"/>
    <property type="molecule type" value="Genomic_DNA"/>
</dbReference>
<dbReference type="RefSeq" id="WP_011947606.1">
    <property type="nucleotide sequence ID" value="NC_009494.2"/>
</dbReference>
<dbReference type="SMR" id="A5IAM8"/>
<dbReference type="KEGG" id="lpc:LPC_0439"/>
<dbReference type="HOGENOM" id="CLU_032616_0_0_6"/>
<dbReference type="GO" id="GO:0005524">
    <property type="term" value="F:ATP binding"/>
    <property type="evidence" value="ECO:0007669"/>
    <property type="project" value="UniProtKB-UniRule"/>
</dbReference>
<dbReference type="GO" id="GO:0052381">
    <property type="term" value="F:tRNA dimethylallyltransferase activity"/>
    <property type="evidence" value="ECO:0007669"/>
    <property type="project" value="UniProtKB-UniRule"/>
</dbReference>
<dbReference type="GO" id="GO:0006400">
    <property type="term" value="P:tRNA modification"/>
    <property type="evidence" value="ECO:0007669"/>
    <property type="project" value="TreeGrafter"/>
</dbReference>
<dbReference type="FunFam" id="1.10.20.140:FF:000001">
    <property type="entry name" value="tRNA dimethylallyltransferase"/>
    <property type="match status" value="1"/>
</dbReference>
<dbReference type="Gene3D" id="1.10.20.140">
    <property type="match status" value="1"/>
</dbReference>
<dbReference type="Gene3D" id="3.40.50.300">
    <property type="entry name" value="P-loop containing nucleotide triphosphate hydrolases"/>
    <property type="match status" value="1"/>
</dbReference>
<dbReference type="HAMAP" id="MF_00185">
    <property type="entry name" value="IPP_trans"/>
    <property type="match status" value="1"/>
</dbReference>
<dbReference type="InterPro" id="IPR039657">
    <property type="entry name" value="Dimethylallyltransferase"/>
</dbReference>
<dbReference type="InterPro" id="IPR018022">
    <property type="entry name" value="IPT"/>
</dbReference>
<dbReference type="InterPro" id="IPR027417">
    <property type="entry name" value="P-loop_NTPase"/>
</dbReference>
<dbReference type="NCBIfam" id="TIGR00174">
    <property type="entry name" value="miaA"/>
    <property type="match status" value="1"/>
</dbReference>
<dbReference type="PANTHER" id="PTHR11088">
    <property type="entry name" value="TRNA DIMETHYLALLYLTRANSFERASE"/>
    <property type="match status" value="1"/>
</dbReference>
<dbReference type="PANTHER" id="PTHR11088:SF60">
    <property type="entry name" value="TRNA DIMETHYLALLYLTRANSFERASE"/>
    <property type="match status" value="1"/>
</dbReference>
<dbReference type="Pfam" id="PF01715">
    <property type="entry name" value="IPPT"/>
    <property type="match status" value="1"/>
</dbReference>
<dbReference type="SUPFAM" id="SSF52540">
    <property type="entry name" value="P-loop containing nucleoside triphosphate hydrolases"/>
    <property type="match status" value="1"/>
</dbReference>
<name>MIAA_LEGPC</name>
<comment type="function">
    <text evidence="1">Catalyzes the transfer of a dimethylallyl group onto the adenine at position 37 in tRNAs that read codons beginning with uridine, leading to the formation of N6-(dimethylallyl)adenosine (i(6)A).</text>
</comment>
<comment type="catalytic activity">
    <reaction evidence="1">
        <text>adenosine(37) in tRNA + dimethylallyl diphosphate = N(6)-dimethylallyladenosine(37) in tRNA + diphosphate</text>
        <dbReference type="Rhea" id="RHEA:26482"/>
        <dbReference type="Rhea" id="RHEA-COMP:10162"/>
        <dbReference type="Rhea" id="RHEA-COMP:10375"/>
        <dbReference type="ChEBI" id="CHEBI:33019"/>
        <dbReference type="ChEBI" id="CHEBI:57623"/>
        <dbReference type="ChEBI" id="CHEBI:74411"/>
        <dbReference type="ChEBI" id="CHEBI:74415"/>
        <dbReference type="EC" id="2.5.1.75"/>
    </reaction>
</comment>
<comment type="cofactor">
    <cofactor evidence="1">
        <name>Mg(2+)</name>
        <dbReference type="ChEBI" id="CHEBI:18420"/>
    </cofactor>
</comment>
<comment type="subunit">
    <text evidence="1">Monomer.</text>
</comment>
<comment type="similarity">
    <text evidence="1">Belongs to the IPP transferase family.</text>
</comment>
<organism>
    <name type="scientific">Legionella pneumophila (strain Corby)</name>
    <dbReference type="NCBI Taxonomy" id="400673"/>
    <lineage>
        <taxon>Bacteria</taxon>
        <taxon>Pseudomonadati</taxon>
        <taxon>Pseudomonadota</taxon>
        <taxon>Gammaproteobacteria</taxon>
        <taxon>Legionellales</taxon>
        <taxon>Legionellaceae</taxon>
        <taxon>Legionella</taxon>
    </lineage>
</organism>
<keyword id="KW-0067">ATP-binding</keyword>
<keyword id="KW-0460">Magnesium</keyword>
<keyword id="KW-0547">Nucleotide-binding</keyword>
<keyword id="KW-0808">Transferase</keyword>
<keyword id="KW-0819">tRNA processing</keyword>